<reference key="1">
    <citation type="journal article" date="2008" name="J. Bacteriol.">
        <title>Insights into the environmental resistance gene pool from the genome sequence of the multidrug-resistant environmental isolate Escherichia coli SMS-3-5.</title>
        <authorList>
            <person name="Fricke W.F."/>
            <person name="Wright M.S."/>
            <person name="Lindell A.H."/>
            <person name="Harkins D.M."/>
            <person name="Baker-Austin C."/>
            <person name="Ravel J."/>
            <person name="Stepanauskas R."/>
        </authorList>
    </citation>
    <scope>NUCLEOTIDE SEQUENCE [LARGE SCALE GENOMIC DNA]</scope>
    <source>
        <strain>SMS-3-5 / SECEC</strain>
    </source>
</reference>
<dbReference type="EC" id="1.4.3.5" evidence="1"/>
<dbReference type="EMBL" id="CP000970">
    <property type="protein sequence ID" value="ACB15859.1"/>
    <property type="molecule type" value="Genomic_DNA"/>
</dbReference>
<dbReference type="RefSeq" id="WP_001282305.1">
    <property type="nucleotide sequence ID" value="NC_010498.1"/>
</dbReference>
<dbReference type="SMR" id="B1LEP8"/>
<dbReference type="KEGG" id="ecm:EcSMS35_1561"/>
<dbReference type="HOGENOM" id="CLU_032263_2_2_6"/>
<dbReference type="UniPathway" id="UPA01068">
    <property type="reaction ID" value="UER00304"/>
</dbReference>
<dbReference type="UniPathway" id="UPA01068">
    <property type="reaction ID" value="UER00305"/>
</dbReference>
<dbReference type="Proteomes" id="UP000007011">
    <property type="component" value="Chromosome"/>
</dbReference>
<dbReference type="GO" id="GO:0010181">
    <property type="term" value="F:FMN binding"/>
    <property type="evidence" value="ECO:0007669"/>
    <property type="project" value="UniProtKB-UniRule"/>
</dbReference>
<dbReference type="GO" id="GO:0004733">
    <property type="term" value="F:pyridoxamine phosphate oxidase activity"/>
    <property type="evidence" value="ECO:0007669"/>
    <property type="project" value="UniProtKB-UniRule"/>
</dbReference>
<dbReference type="GO" id="GO:0008615">
    <property type="term" value="P:pyridoxine biosynthetic process"/>
    <property type="evidence" value="ECO:0007669"/>
    <property type="project" value="UniProtKB-KW"/>
</dbReference>
<dbReference type="FunFam" id="2.30.110.10:FF:000001">
    <property type="entry name" value="Pyridoxine/pyridoxamine 5'-phosphate oxidase"/>
    <property type="match status" value="1"/>
</dbReference>
<dbReference type="Gene3D" id="2.30.110.10">
    <property type="entry name" value="Electron Transport, Fmn-binding Protein, Chain A"/>
    <property type="match status" value="1"/>
</dbReference>
<dbReference type="HAMAP" id="MF_01629">
    <property type="entry name" value="PdxH"/>
    <property type="match status" value="1"/>
</dbReference>
<dbReference type="InterPro" id="IPR000659">
    <property type="entry name" value="Pyridox_Oxase"/>
</dbReference>
<dbReference type="InterPro" id="IPR019740">
    <property type="entry name" value="Pyridox_Oxase_CS"/>
</dbReference>
<dbReference type="InterPro" id="IPR011576">
    <property type="entry name" value="Pyridox_Oxase_N"/>
</dbReference>
<dbReference type="InterPro" id="IPR019576">
    <property type="entry name" value="Pyridoxamine_oxidase_dimer_C"/>
</dbReference>
<dbReference type="InterPro" id="IPR012349">
    <property type="entry name" value="Split_barrel_FMN-bd"/>
</dbReference>
<dbReference type="NCBIfam" id="TIGR00558">
    <property type="entry name" value="pdxH"/>
    <property type="match status" value="1"/>
</dbReference>
<dbReference type="NCBIfam" id="NF004231">
    <property type="entry name" value="PRK05679.1"/>
    <property type="match status" value="1"/>
</dbReference>
<dbReference type="PANTHER" id="PTHR10851:SF0">
    <property type="entry name" value="PYRIDOXINE-5'-PHOSPHATE OXIDASE"/>
    <property type="match status" value="1"/>
</dbReference>
<dbReference type="PANTHER" id="PTHR10851">
    <property type="entry name" value="PYRIDOXINE-5-PHOSPHATE OXIDASE"/>
    <property type="match status" value="1"/>
</dbReference>
<dbReference type="Pfam" id="PF10590">
    <property type="entry name" value="PNP_phzG_C"/>
    <property type="match status" value="1"/>
</dbReference>
<dbReference type="Pfam" id="PF01243">
    <property type="entry name" value="PNPOx_N"/>
    <property type="match status" value="1"/>
</dbReference>
<dbReference type="PIRSF" id="PIRSF000190">
    <property type="entry name" value="Pyd_amn-ph_oxd"/>
    <property type="match status" value="1"/>
</dbReference>
<dbReference type="SUPFAM" id="SSF50475">
    <property type="entry name" value="FMN-binding split barrel"/>
    <property type="match status" value="1"/>
</dbReference>
<dbReference type="PROSITE" id="PS01064">
    <property type="entry name" value="PYRIDOX_OXIDASE"/>
    <property type="match status" value="1"/>
</dbReference>
<name>PDXH_ECOSM</name>
<proteinExistence type="inferred from homology"/>
<comment type="function">
    <text evidence="1">Catalyzes the oxidation of either pyridoxine 5'-phosphate (PNP) or pyridoxamine 5'-phosphate (PMP) into pyridoxal 5'-phosphate (PLP).</text>
</comment>
<comment type="catalytic activity">
    <reaction evidence="1">
        <text>pyridoxamine 5'-phosphate + O2 + H2O = pyridoxal 5'-phosphate + H2O2 + NH4(+)</text>
        <dbReference type="Rhea" id="RHEA:15817"/>
        <dbReference type="ChEBI" id="CHEBI:15377"/>
        <dbReference type="ChEBI" id="CHEBI:15379"/>
        <dbReference type="ChEBI" id="CHEBI:16240"/>
        <dbReference type="ChEBI" id="CHEBI:28938"/>
        <dbReference type="ChEBI" id="CHEBI:58451"/>
        <dbReference type="ChEBI" id="CHEBI:597326"/>
        <dbReference type="EC" id="1.4.3.5"/>
    </reaction>
</comment>
<comment type="catalytic activity">
    <reaction evidence="1">
        <text>pyridoxine 5'-phosphate + O2 = pyridoxal 5'-phosphate + H2O2</text>
        <dbReference type="Rhea" id="RHEA:15149"/>
        <dbReference type="ChEBI" id="CHEBI:15379"/>
        <dbReference type="ChEBI" id="CHEBI:16240"/>
        <dbReference type="ChEBI" id="CHEBI:58589"/>
        <dbReference type="ChEBI" id="CHEBI:597326"/>
        <dbReference type="EC" id="1.4.3.5"/>
    </reaction>
</comment>
<comment type="cofactor">
    <cofactor evidence="1">
        <name>FMN</name>
        <dbReference type="ChEBI" id="CHEBI:58210"/>
    </cofactor>
    <text evidence="1">Binds 1 FMN per subunit.</text>
</comment>
<comment type="pathway">
    <text evidence="1">Cofactor metabolism; pyridoxal 5'-phosphate salvage; pyridoxal 5'-phosphate from pyridoxamine 5'-phosphate: step 1/1.</text>
</comment>
<comment type="pathway">
    <text evidence="1">Cofactor metabolism; pyridoxal 5'-phosphate salvage; pyridoxal 5'-phosphate from pyridoxine 5'-phosphate: step 1/1.</text>
</comment>
<comment type="subunit">
    <text evidence="1">Homodimer.</text>
</comment>
<comment type="similarity">
    <text evidence="1">Belongs to the pyridoxamine 5'-phosphate oxidase family.</text>
</comment>
<sequence length="218" mass="25531">MSDNDELQQIAHLRREYTKGGLRRRDLPADPLTLFERWLSQACDAKLADPTAMVVATVDEHGQPYQRIVLLKHYDEKGMVFYTNLGSRKAHQIENNPRVSLLFPWHTLERQVMVIGKAERLSTLEVMKYFHSRPRDSQIGAWVSKQSSRISARGILESKFLELKQKFQQGEVPLPSFWGGFRVSLEQIEFWQGGEHRLHDRFLYQRENDAWKIDRLAP</sequence>
<evidence type="ECO:0000255" key="1">
    <source>
        <dbReference type="HAMAP-Rule" id="MF_01629"/>
    </source>
</evidence>
<accession>B1LEP8</accession>
<protein>
    <recommendedName>
        <fullName evidence="1">Pyridoxine/pyridoxamine 5'-phosphate oxidase</fullName>
        <ecNumber evidence="1">1.4.3.5</ecNumber>
    </recommendedName>
    <alternativeName>
        <fullName evidence="1">PNP/PMP oxidase</fullName>
        <shortName evidence="1">PNPOx</shortName>
    </alternativeName>
    <alternativeName>
        <fullName evidence="1">Pyridoxal 5'-phosphate synthase</fullName>
    </alternativeName>
</protein>
<feature type="chain" id="PRO_1000186314" description="Pyridoxine/pyridoxamine 5'-phosphate oxidase">
    <location>
        <begin position="1"/>
        <end position="218"/>
    </location>
</feature>
<feature type="binding site" evidence="1">
    <location>
        <begin position="14"/>
        <end position="17"/>
    </location>
    <ligand>
        <name>substrate</name>
    </ligand>
</feature>
<feature type="binding site" evidence="1">
    <location>
        <begin position="67"/>
        <end position="72"/>
    </location>
    <ligand>
        <name>FMN</name>
        <dbReference type="ChEBI" id="CHEBI:58210"/>
    </ligand>
</feature>
<feature type="binding site" evidence="1">
    <location>
        <position position="72"/>
    </location>
    <ligand>
        <name>substrate</name>
    </ligand>
</feature>
<feature type="binding site" evidence="1">
    <location>
        <begin position="82"/>
        <end position="83"/>
    </location>
    <ligand>
        <name>FMN</name>
        <dbReference type="ChEBI" id="CHEBI:58210"/>
    </ligand>
</feature>
<feature type="binding site" evidence="1">
    <location>
        <position position="88"/>
    </location>
    <ligand>
        <name>FMN</name>
        <dbReference type="ChEBI" id="CHEBI:58210"/>
    </ligand>
</feature>
<feature type="binding site" evidence="1">
    <location>
        <position position="89"/>
    </location>
    <ligand>
        <name>FMN</name>
        <dbReference type="ChEBI" id="CHEBI:58210"/>
    </ligand>
</feature>
<feature type="binding site" evidence="1">
    <location>
        <position position="111"/>
    </location>
    <ligand>
        <name>FMN</name>
        <dbReference type="ChEBI" id="CHEBI:58210"/>
    </ligand>
</feature>
<feature type="binding site" evidence="1">
    <location>
        <position position="129"/>
    </location>
    <ligand>
        <name>substrate</name>
    </ligand>
</feature>
<feature type="binding site" evidence="1">
    <location>
        <position position="133"/>
    </location>
    <ligand>
        <name>substrate</name>
    </ligand>
</feature>
<feature type="binding site" evidence="1">
    <location>
        <position position="137"/>
    </location>
    <ligand>
        <name>substrate</name>
    </ligand>
</feature>
<feature type="binding site" evidence="1">
    <location>
        <begin position="146"/>
        <end position="147"/>
    </location>
    <ligand>
        <name>FMN</name>
        <dbReference type="ChEBI" id="CHEBI:58210"/>
    </ligand>
</feature>
<feature type="binding site" evidence="1">
    <location>
        <position position="191"/>
    </location>
    <ligand>
        <name>FMN</name>
        <dbReference type="ChEBI" id="CHEBI:58210"/>
    </ligand>
</feature>
<feature type="binding site" evidence="1">
    <location>
        <begin position="197"/>
        <end position="199"/>
    </location>
    <ligand>
        <name>substrate</name>
    </ligand>
</feature>
<feature type="binding site" evidence="1">
    <location>
        <position position="201"/>
    </location>
    <ligand>
        <name>FMN</name>
        <dbReference type="ChEBI" id="CHEBI:58210"/>
    </ligand>
</feature>
<organism>
    <name type="scientific">Escherichia coli (strain SMS-3-5 / SECEC)</name>
    <dbReference type="NCBI Taxonomy" id="439855"/>
    <lineage>
        <taxon>Bacteria</taxon>
        <taxon>Pseudomonadati</taxon>
        <taxon>Pseudomonadota</taxon>
        <taxon>Gammaproteobacteria</taxon>
        <taxon>Enterobacterales</taxon>
        <taxon>Enterobacteriaceae</taxon>
        <taxon>Escherichia</taxon>
    </lineage>
</organism>
<gene>
    <name evidence="1" type="primary">pdxH</name>
    <name type="ordered locus">EcSMS35_1561</name>
</gene>
<keyword id="KW-0285">Flavoprotein</keyword>
<keyword id="KW-0288">FMN</keyword>
<keyword id="KW-0560">Oxidoreductase</keyword>
<keyword id="KW-0664">Pyridoxine biosynthesis</keyword>